<sequence length="81" mass="8804">MSESEIFGKVKDIVAEQLSVDADKVTPEASFQNDLDADSLDVVEMVMALEEEFDIEIPDEAAEEILTVQAAVDFIAGKVKA</sequence>
<dbReference type="EMBL" id="CP000828">
    <property type="protein sequence ID" value="ABW30477.1"/>
    <property type="molecule type" value="Genomic_DNA"/>
</dbReference>
<dbReference type="RefSeq" id="WP_010477306.1">
    <property type="nucleotide sequence ID" value="NC_009925.1"/>
</dbReference>
<dbReference type="SMR" id="B0CE03"/>
<dbReference type="STRING" id="329726.AM1_5523"/>
<dbReference type="KEGG" id="amr:AM1_5523"/>
<dbReference type="eggNOG" id="COG0236">
    <property type="taxonomic scope" value="Bacteria"/>
</dbReference>
<dbReference type="HOGENOM" id="CLU_108696_5_1_3"/>
<dbReference type="OrthoDB" id="9804551at2"/>
<dbReference type="UniPathway" id="UPA00094"/>
<dbReference type="Proteomes" id="UP000000268">
    <property type="component" value="Chromosome"/>
</dbReference>
<dbReference type="GO" id="GO:0005829">
    <property type="term" value="C:cytosol"/>
    <property type="evidence" value="ECO:0007669"/>
    <property type="project" value="TreeGrafter"/>
</dbReference>
<dbReference type="GO" id="GO:0016020">
    <property type="term" value="C:membrane"/>
    <property type="evidence" value="ECO:0007669"/>
    <property type="project" value="GOC"/>
</dbReference>
<dbReference type="GO" id="GO:0000035">
    <property type="term" value="F:acyl binding"/>
    <property type="evidence" value="ECO:0007669"/>
    <property type="project" value="TreeGrafter"/>
</dbReference>
<dbReference type="GO" id="GO:0000036">
    <property type="term" value="F:acyl carrier activity"/>
    <property type="evidence" value="ECO:0007669"/>
    <property type="project" value="UniProtKB-UniRule"/>
</dbReference>
<dbReference type="GO" id="GO:0009245">
    <property type="term" value="P:lipid A biosynthetic process"/>
    <property type="evidence" value="ECO:0007669"/>
    <property type="project" value="TreeGrafter"/>
</dbReference>
<dbReference type="FunFam" id="1.10.1200.10:FF:000003">
    <property type="entry name" value="Acyl carrier protein"/>
    <property type="match status" value="1"/>
</dbReference>
<dbReference type="Gene3D" id="1.10.1200.10">
    <property type="entry name" value="ACP-like"/>
    <property type="match status" value="1"/>
</dbReference>
<dbReference type="HAMAP" id="MF_01217">
    <property type="entry name" value="Acyl_carrier"/>
    <property type="match status" value="1"/>
</dbReference>
<dbReference type="InterPro" id="IPR003231">
    <property type="entry name" value="ACP"/>
</dbReference>
<dbReference type="InterPro" id="IPR036736">
    <property type="entry name" value="ACP-like_sf"/>
</dbReference>
<dbReference type="InterPro" id="IPR009081">
    <property type="entry name" value="PP-bd_ACP"/>
</dbReference>
<dbReference type="NCBIfam" id="TIGR00517">
    <property type="entry name" value="acyl_carrier"/>
    <property type="match status" value="1"/>
</dbReference>
<dbReference type="NCBIfam" id="NF002148">
    <property type="entry name" value="PRK00982.1-2"/>
    <property type="match status" value="1"/>
</dbReference>
<dbReference type="NCBIfam" id="NF002149">
    <property type="entry name" value="PRK00982.1-3"/>
    <property type="match status" value="1"/>
</dbReference>
<dbReference type="NCBIfam" id="NF002150">
    <property type="entry name" value="PRK00982.1-4"/>
    <property type="match status" value="1"/>
</dbReference>
<dbReference type="NCBIfam" id="NF002151">
    <property type="entry name" value="PRK00982.1-5"/>
    <property type="match status" value="1"/>
</dbReference>
<dbReference type="PANTHER" id="PTHR20863">
    <property type="entry name" value="ACYL CARRIER PROTEIN"/>
    <property type="match status" value="1"/>
</dbReference>
<dbReference type="PANTHER" id="PTHR20863:SF76">
    <property type="entry name" value="CARRIER DOMAIN-CONTAINING PROTEIN"/>
    <property type="match status" value="1"/>
</dbReference>
<dbReference type="Pfam" id="PF00550">
    <property type="entry name" value="PP-binding"/>
    <property type="match status" value="1"/>
</dbReference>
<dbReference type="SUPFAM" id="SSF47336">
    <property type="entry name" value="ACP-like"/>
    <property type="match status" value="1"/>
</dbReference>
<dbReference type="PROSITE" id="PS50075">
    <property type="entry name" value="CARRIER"/>
    <property type="match status" value="1"/>
</dbReference>
<organism>
    <name type="scientific">Acaryochloris marina (strain MBIC 11017)</name>
    <dbReference type="NCBI Taxonomy" id="329726"/>
    <lineage>
        <taxon>Bacteria</taxon>
        <taxon>Bacillati</taxon>
        <taxon>Cyanobacteriota</taxon>
        <taxon>Cyanophyceae</taxon>
        <taxon>Acaryochloridales</taxon>
        <taxon>Acaryochloridaceae</taxon>
        <taxon>Acaryochloris</taxon>
    </lineage>
</organism>
<evidence type="ECO:0000255" key="1">
    <source>
        <dbReference type="HAMAP-Rule" id="MF_01217"/>
    </source>
</evidence>
<evidence type="ECO:0000255" key="2">
    <source>
        <dbReference type="PROSITE-ProRule" id="PRU00258"/>
    </source>
</evidence>
<keyword id="KW-0963">Cytoplasm</keyword>
<keyword id="KW-0275">Fatty acid biosynthesis</keyword>
<keyword id="KW-0276">Fatty acid metabolism</keyword>
<keyword id="KW-0444">Lipid biosynthesis</keyword>
<keyword id="KW-0443">Lipid metabolism</keyword>
<keyword id="KW-0596">Phosphopantetheine</keyword>
<keyword id="KW-0597">Phosphoprotein</keyword>
<keyword id="KW-1185">Reference proteome</keyword>
<feature type="chain" id="PRO_1000085592" description="Acyl carrier protein">
    <location>
        <begin position="1"/>
        <end position="81"/>
    </location>
</feature>
<feature type="domain" description="Carrier" evidence="2">
    <location>
        <begin position="4"/>
        <end position="79"/>
    </location>
</feature>
<feature type="modified residue" description="O-(pantetheine 4'-phosphoryl)serine" evidence="2">
    <location>
        <position position="39"/>
    </location>
</feature>
<proteinExistence type="inferred from homology"/>
<protein>
    <recommendedName>
        <fullName evidence="1">Acyl carrier protein</fullName>
        <shortName evidence="1">ACP</shortName>
    </recommendedName>
</protein>
<comment type="function">
    <text evidence="1">Carrier of the growing fatty acid chain in fatty acid biosynthesis.</text>
</comment>
<comment type="pathway">
    <text evidence="1">Lipid metabolism; fatty acid biosynthesis.</text>
</comment>
<comment type="subcellular location">
    <subcellularLocation>
        <location evidence="1">Cytoplasm</location>
    </subcellularLocation>
</comment>
<comment type="PTM">
    <text evidence="1">4'-phosphopantetheine is transferred from CoA to a specific serine of apo-ACP by AcpS. This modification is essential for activity because fatty acids are bound in thioester linkage to the sulfhydryl of the prosthetic group.</text>
</comment>
<comment type="similarity">
    <text evidence="1">Belongs to the acyl carrier protein (ACP) family.</text>
</comment>
<reference key="1">
    <citation type="journal article" date="2008" name="Proc. Natl. Acad. Sci. U.S.A.">
        <title>Niche adaptation and genome expansion in the chlorophyll d-producing cyanobacterium Acaryochloris marina.</title>
        <authorList>
            <person name="Swingley W.D."/>
            <person name="Chen M."/>
            <person name="Cheung P.C."/>
            <person name="Conrad A.L."/>
            <person name="Dejesa L.C."/>
            <person name="Hao J."/>
            <person name="Honchak B.M."/>
            <person name="Karbach L.E."/>
            <person name="Kurdoglu A."/>
            <person name="Lahiri S."/>
            <person name="Mastrian S.D."/>
            <person name="Miyashita H."/>
            <person name="Page L."/>
            <person name="Ramakrishna P."/>
            <person name="Satoh S."/>
            <person name="Sattley W.M."/>
            <person name="Shimada Y."/>
            <person name="Taylor H.L."/>
            <person name="Tomo T."/>
            <person name="Tsuchiya T."/>
            <person name="Wang Z.T."/>
            <person name="Raymond J."/>
            <person name="Mimuro M."/>
            <person name="Blankenship R.E."/>
            <person name="Touchman J.W."/>
        </authorList>
    </citation>
    <scope>NUCLEOTIDE SEQUENCE [LARGE SCALE GENOMIC DNA]</scope>
    <source>
        <strain>MBIC 11017</strain>
    </source>
</reference>
<accession>B0CE03</accession>
<name>ACP_ACAM1</name>
<gene>
    <name evidence="1" type="primary">acpP</name>
    <name type="ordered locus">AM1_5523</name>
</gene>